<reference key="1">
    <citation type="journal article" date="2006" name="Proc. Natl. Acad. Sci. U.S.A.">
        <title>The partitioned Rhizobium etli genome: genetic and metabolic redundancy in seven interacting replicons.</title>
        <authorList>
            <person name="Gonzalez V."/>
            <person name="Santamaria R.I."/>
            <person name="Bustos P."/>
            <person name="Hernandez-Gonzalez I."/>
            <person name="Medrano-Soto A."/>
            <person name="Moreno-Hagelsieb G."/>
            <person name="Janga S.C."/>
            <person name="Ramirez M.A."/>
            <person name="Jimenez-Jacinto V."/>
            <person name="Collado-Vides J."/>
            <person name="Davila G."/>
        </authorList>
    </citation>
    <scope>NUCLEOTIDE SEQUENCE [LARGE SCALE GENOMIC DNA]</scope>
    <source>
        <strain>ATCC 51251 / DSM 11541 / JCM 21823 / NBRC 15573 / CFN 42</strain>
    </source>
</reference>
<name>RL17_RHIEC</name>
<sequence length="140" mass="15361">MRHGKAGRKLNRTASHRKAMFANMAASLITHEQIVTTLPKAKEIRPIVEKLVTLGKRGDLHARRQAISQIRDAAVVSKLFDTIATRYATRNGGYLRIMKAGFRQGDNAAMAVIEFVDRDTYAKGAADKARVAAEEQAVAA</sequence>
<keyword id="KW-1185">Reference proteome</keyword>
<keyword id="KW-0687">Ribonucleoprotein</keyword>
<keyword id="KW-0689">Ribosomal protein</keyword>
<gene>
    <name evidence="1" type="primary">rplQ</name>
    <name type="ordered locus">RHE_CH01700</name>
</gene>
<accession>Q2K9J1</accession>
<organism>
    <name type="scientific">Rhizobium etli (strain ATCC 51251 / DSM 11541 / JCM 21823 / NBRC 15573 / CFN 42)</name>
    <dbReference type="NCBI Taxonomy" id="347834"/>
    <lineage>
        <taxon>Bacteria</taxon>
        <taxon>Pseudomonadati</taxon>
        <taxon>Pseudomonadota</taxon>
        <taxon>Alphaproteobacteria</taxon>
        <taxon>Hyphomicrobiales</taxon>
        <taxon>Rhizobiaceae</taxon>
        <taxon>Rhizobium/Agrobacterium group</taxon>
        <taxon>Rhizobium</taxon>
    </lineage>
</organism>
<dbReference type="EMBL" id="CP000133">
    <property type="protein sequence ID" value="ABC90495.1"/>
    <property type="molecule type" value="Genomic_DNA"/>
</dbReference>
<dbReference type="RefSeq" id="WP_011424993.1">
    <property type="nucleotide sequence ID" value="NC_007761.1"/>
</dbReference>
<dbReference type="SMR" id="Q2K9J1"/>
<dbReference type="GeneID" id="66145881"/>
<dbReference type="KEGG" id="ret:RHE_CH01700"/>
<dbReference type="eggNOG" id="COG0203">
    <property type="taxonomic scope" value="Bacteria"/>
</dbReference>
<dbReference type="HOGENOM" id="CLU_074407_2_0_5"/>
<dbReference type="OrthoDB" id="9809073at2"/>
<dbReference type="Proteomes" id="UP000001936">
    <property type="component" value="Chromosome"/>
</dbReference>
<dbReference type="GO" id="GO:0022625">
    <property type="term" value="C:cytosolic large ribosomal subunit"/>
    <property type="evidence" value="ECO:0007669"/>
    <property type="project" value="TreeGrafter"/>
</dbReference>
<dbReference type="GO" id="GO:0003735">
    <property type="term" value="F:structural constituent of ribosome"/>
    <property type="evidence" value="ECO:0007669"/>
    <property type="project" value="InterPro"/>
</dbReference>
<dbReference type="GO" id="GO:0006412">
    <property type="term" value="P:translation"/>
    <property type="evidence" value="ECO:0007669"/>
    <property type="project" value="UniProtKB-UniRule"/>
</dbReference>
<dbReference type="FunFam" id="3.90.1030.10:FF:000001">
    <property type="entry name" value="50S ribosomal protein L17"/>
    <property type="match status" value="1"/>
</dbReference>
<dbReference type="Gene3D" id="3.90.1030.10">
    <property type="entry name" value="Ribosomal protein L17"/>
    <property type="match status" value="1"/>
</dbReference>
<dbReference type="HAMAP" id="MF_01368">
    <property type="entry name" value="Ribosomal_bL17"/>
    <property type="match status" value="1"/>
</dbReference>
<dbReference type="InterPro" id="IPR000456">
    <property type="entry name" value="Ribosomal_bL17"/>
</dbReference>
<dbReference type="InterPro" id="IPR047859">
    <property type="entry name" value="Ribosomal_bL17_CS"/>
</dbReference>
<dbReference type="InterPro" id="IPR036373">
    <property type="entry name" value="Ribosomal_bL17_sf"/>
</dbReference>
<dbReference type="NCBIfam" id="TIGR00059">
    <property type="entry name" value="L17"/>
    <property type="match status" value="1"/>
</dbReference>
<dbReference type="PANTHER" id="PTHR14413:SF16">
    <property type="entry name" value="LARGE RIBOSOMAL SUBUNIT PROTEIN BL17M"/>
    <property type="match status" value="1"/>
</dbReference>
<dbReference type="PANTHER" id="PTHR14413">
    <property type="entry name" value="RIBOSOMAL PROTEIN L17"/>
    <property type="match status" value="1"/>
</dbReference>
<dbReference type="Pfam" id="PF01196">
    <property type="entry name" value="Ribosomal_L17"/>
    <property type="match status" value="1"/>
</dbReference>
<dbReference type="SUPFAM" id="SSF64263">
    <property type="entry name" value="Prokaryotic ribosomal protein L17"/>
    <property type="match status" value="1"/>
</dbReference>
<dbReference type="PROSITE" id="PS01167">
    <property type="entry name" value="RIBOSOMAL_L17"/>
    <property type="match status" value="1"/>
</dbReference>
<comment type="subunit">
    <text evidence="1">Part of the 50S ribosomal subunit. Contacts protein L32.</text>
</comment>
<comment type="similarity">
    <text evidence="1">Belongs to the bacterial ribosomal protein bL17 family.</text>
</comment>
<evidence type="ECO:0000255" key="1">
    <source>
        <dbReference type="HAMAP-Rule" id="MF_01368"/>
    </source>
</evidence>
<evidence type="ECO:0000305" key="2"/>
<proteinExistence type="inferred from homology"/>
<feature type="chain" id="PRO_0000267923" description="Large ribosomal subunit protein bL17">
    <location>
        <begin position="1"/>
        <end position="140"/>
    </location>
</feature>
<protein>
    <recommendedName>
        <fullName evidence="1">Large ribosomal subunit protein bL17</fullName>
    </recommendedName>
    <alternativeName>
        <fullName evidence="2">50S ribosomal protein L17</fullName>
    </alternativeName>
</protein>